<comment type="function">
    <text evidence="1">Endonuclease that resolves Holliday junction intermediates in genetic recombination. Cleaves mobile four-strand junctions by introducing symmetrical nicks in paired strands. Promotes annealing of linear ssDNA with homologous dsDNA. Required for DNA repair, homologous recombination and chromosome segregation.</text>
</comment>
<comment type="catalytic activity">
    <reaction evidence="1">
        <text>Endonucleolytic cleavage at a junction such as a reciprocal single-stranded crossover between two homologous DNA duplexes (Holliday junction).</text>
        <dbReference type="EC" id="3.1.21.10"/>
    </reaction>
</comment>
<comment type="cofactor">
    <cofactor evidence="1">
        <name>Mg(2+)</name>
        <dbReference type="ChEBI" id="CHEBI:18420"/>
    </cofactor>
    <text evidence="1">Binds 1 Mg(2+) ion per subunit.</text>
</comment>
<comment type="subcellular location">
    <subcellularLocation>
        <location evidence="1">Cytoplasm</location>
    </subcellularLocation>
</comment>
<comment type="similarity">
    <text evidence="1">Belongs to the RecU family.</text>
</comment>
<feature type="chain" id="PRO_1000016738" description="Holliday junction resolvase RecU">
    <location>
        <begin position="1"/>
        <end position="201"/>
    </location>
</feature>
<feature type="binding site" evidence="1">
    <location>
        <position position="85"/>
    </location>
    <ligand>
        <name>Mg(2+)</name>
        <dbReference type="ChEBI" id="CHEBI:18420"/>
    </ligand>
</feature>
<feature type="binding site" evidence="1">
    <location>
        <position position="87"/>
    </location>
    <ligand>
        <name>Mg(2+)</name>
        <dbReference type="ChEBI" id="CHEBI:18420"/>
    </ligand>
</feature>
<feature type="binding site" evidence="1">
    <location>
        <position position="100"/>
    </location>
    <ligand>
        <name>Mg(2+)</name>
        <dbReference type="ChEBI" id="CHEBI:18420"/>
    </ligand>
</feature>
<feature type="binding site" evidence="1">
    <location>
        <position position="119"/>
    </location>
    <ligand>
        <name>Mg(2+)</name>
        <dbReference type="ChEBI" id="CHEBI:18420"/>
    </ligand>
</feature>
<feature type="site" description="Transition state stabilizer" evidence="1">
    <location>
        <position position="102"/>
    </location>
</feature>
<accession>Q03FN2</accession>
<organism>
    <name type="scientific">Pediococcus pentosaceus (strain ATCC 25745 / CCUG 21536 / LMG 10740 / 183-1w)</name>
    <dbReference type="NCBI Taxonomy" id="278197"/>
    <lineage>
        <taxon>Bacteria</taxon>
        <taxon>Bacillati</taxon>
        <taxon>Bacillota</taxon>
        <taxon>Bacilli</taxon>
        <taxon>Lactobacillales</taxon>
        <taxon>Lactobacillaceae</taxon>
        <taxon>Pediococcus</taxon>
    </lineage>
</organism>
<protein>
    <recommendedName>
        <fullName evidence="1">Holliday junction resolvase RecU</fullName>
        <ecNumber evidence="1">3.1.21.10</ecNumber>
    </recommendedName>
    <alternativeName>
        <fullName evidence="1">Recombination protein U homolog</fullName>
    </alternativeName>
</protein>
<gene>
    <name evidence="1" type="primary">recU</name>
    <name type="ordered locus">PEPE_0932</name>
</gene>
<sequence>MKFNYPTGSKATTPKMSQAKVSMPPIYGKRGMSLEEELNESNAYYLSHGVAVIHKKPTPIQIVKVDYPKRSAAQIKEAYFSKASTTDYNGVYRGKYIDFDAKETTNSTSFPLSNFHEHQINHMKDCEKVGGICFTIIKFVKLNKIFLLKTKDLFQFWDSKENGGRKSIPLSVFEEQGYQLEYQMNPLIPYLKAVDKIIENL</sequence>
<dbReference type="EC" id="3.1.21.10" evidence="1"/>
<dbReference type="EMBL" id="CP000422">
    <property type="protein sequence ID" value="ABJ67990.1"/>
    <property type="molecule type" value="Genomic_DNA"/>
</dbReference>
<dbReference type="RefSeq" id="WP_002833049.1">
    <property type="nucleotide sequence ID" value="NC_008525.1"/>
</dbReference>
<dbReference type="SMR" id="Q03FN2"/>
<dbReference type="STRING" id="278197.PEPE_0932"/>
<dbReference type="GeneID" id="33061428"/>
<dbReference type="KEGG" id="ppe:PEPE_0932"/>
<dbReference type="eggNOG" id="COG3331">
    <property type="taxonomic scope" value="Bacteria"/>
</dbReference>
<dbReference type="HOGENOM" id="CLU_096340_0_0_9"/>
<dbReference type="OrthoDB" id="9783592at2"/>
<dbReference type="Proteomes" id="UP000000773">
    <property type="component" value="Chromosome"/>
</dbReference>
<dbReference type="GO" id="GO:0005737">
    <property type="term" value="C:cytoplasm"/>
    <property type="evidence" value="ECO:0007669"/>
    <property type="project" value="UniProtKB-SubCell"/>
</dbReference>
<dbReference type="GO" id="GO:0004519">
    <property type="term" value="F:endonuclease activity"/>
    <property type="evidence" value="ECO:0007669"/>
    <property type="project" value="UniProtKB-UniRule"/>
</dbReference>
<dbReference type="GO" id="GO:0000287">
    <property type="term" value="F:magnesium ion binding"/>
    <property type="evidence" value="ECO:0007669"/>
    <property type="project" value="UniProtKB-UniRule"/>
</dbReference>
<dbReference type="GO" id="GO:0003676">
    <property type="term" value="F:nucleic acid binding"/>
    <property type="evidence" value="ECO:0007669"/>
    <property type="project" value="InterPro"/>
</dbReference>
<dbReference type="GO" id="GO:0007059">
    <property type="term" value="P:chromosome segregation"/>
    <property type="evidence" value="ECO:0007669"/>
    <property type="project" value="UniProtKB-UniRule"/>
</dbReference>
<dbReference type="GO" id="GO:0006310">
    <property type="term" value="P:DNA recombination"/>
    <property type="evidence" value="ECO:0007669"/>
    <property type="project" value="UniProtKB-UniRule"/>
</dbReference>
<dbReference type="GO" id="GO:0006281">
    <property type="term" value="P:DNA repair"/>
    <property type="evidence" value="ECO:0007669"/>
    <property type="project" value="UniProtKB-UniRule"/>
</dbReference>
<dbReference type="CDD" id="cd22354">
    <property type="entry name" value="RecU-like"/>
    <property type="match status" value="1"/>
</dbReference>
<dbReference type="Gene3D" id="3.40.1350.10">
    <property type="match status" value="1"/>
</dbReference>
<dbReference type="HAMAP" id="MF_00130">
    <property type="entry name" value="RecU"/>
    <property type="match status" value="1"/>
</dbReference>
<dbReference type="InterPro" id="IPR004612">
    <property type="entry name" value="Resolv_RecU"/>
</dbReference>
<dbReference type="InterPro" id="IPR011335">
    <property type="entry name" value="Restrct_endonuc-II-like"/>
</dbReference>
<dbReference type="InterPro" id="IPR011856">
    <property type="entry name" value="tRNA_endonuc-like_dom_sf"/>
</dbReference>
<dbReference type="NCBIfam" id="NF002581">
    <property type="entry name" value="PRK02234.1-2"/>
    <property type="match status" value="1"/>
</dbReference>
<dbReference type="NCBIfam" id="NF002584">
    <property type="entry name" value="PRK02234.1-5"/>
    <property type="match status" value="1"/>
</dbReference>
<dbReference type="NCBIfam" id="TIGR00648">
    <property type="entry name" value="recU"/>
    <property type="match status" value="1"/>
</dbReference>
<dbReference type="Pfam" id="PF03838">
    <property type="entry name" value="RecU"/>
    <property type="match status" value="1"/>
</dbReference>
<dbReference type="PIRSF" id="PIRSF037785">
    <property type="entry name" value="RecU"/>
    <property type="match status" value="1"/>
</dbReference>
<dbReference type="SUPFAM" id="SSF52980">
    <property type="entry name" value="Restriction endonuclease-like"/>
    <property type="match status" value="1"/>
</dbReference>
<name>RECU_PEDPA</name>
<proteinExistence type="inferred from homology"/>
<keyword id="KW-0963">Cytoplasm</keyword>
<keyword id="KW-0227">DNA damage</keyword>
<keyword id="KW-0233">DNA recombination</keyword>
<keyword id="KW-0234">DNA repair</keyword>
<keyword id="KW-0255">Endonuclease</keyword>
<keyword id="KW-0378">Hydrolase</keyword>
<keyword id="KW-0460">Magnesium</keyword>
<keyword id="KW-0479">Metal-binding</keyword>
<keyword id="KW-0540">Nuclease</keyword>
<evidence type="ECO:0000255" key="1">
    <source>
        <dbReference type="HAMAP-Rule" id="MF_00130"/>
    </source>
</evidence>
<reference key="1">
    <citation type="journal article" date="2006" name="Proc. Natl. Acad. Sci. U.S.A.">
        <title>Comparative genomics of the lactic acid bacteria.</title>
        <authorList>
            <person name="Makarova K.S."/>
            <person name="Slesarev A."/>
            <person name="Wolf Y.I."/>
            <person name="Sorokin A."/>
            <person name="Mirkin B."/>
            <person name="Koonin E.V."/>
            <person name="Pavlov A."/>
            <person name="Pavlova N."/>
            <person name="Karamychev V."/>
            <person name="Polouchine N."/>
            <person name="Shakhova V."/>
            <person name="Grigoriev I."/>
            <person name="Lou Y."/>
            <person name="Rohksar D."/>
            <person name="Lucas S."/>
            <person name="Huang K."/>
            <person name="Goodstein D.M."/>
            <person name="Hawkins T."/>
            <person name="Plengvidhya V."/>
            <person name="Welker D."/>
            <person name="Hughes J."/>
            <person name="Goh Y."/>
            <person name="Benson A."/>
            <person name="Baldwin K."/>
            <person name="Lee J.-H."/>
            <person name="Diaz-Muniz I."/>
            <person name="Dosti B."/>
            <person name="Smeianov V."/>
            <person name="Wechter W."/>
            <person name="Barabote R."/>
            <person name="Lorca G."/>
            <person name="Altermann E."/>
            <person name="Barrangou R."/>
            <person name="Ganesan B."/>
            <person name="Xie Y."/>
            <person name="Rawsthorne H."/>
            <person name="Tamir D."/>
            <person name="Parker C."/>
            <person name="Breidt F."/>
            <person name="Broadbent J.R."/>
            <person name="Hutkins R."/>
            <person name="O'Sullivan D."/>
            <person name="Steele J."/>
            <person name="Unlu G."/>
            <person name="Saier M.H. Jr."/>
            <person name="Klaenhammer T."/>
            <person name="Richardson P."/>
            <person name="Kozyavkin S."/>
            <person name="Weimer B.C."/>
            <person name="Mills D.A."/>
        </authorList>
    </citation>
    <scope>NUCLEOTIDE SEQUENCE [LARGE SCALE GENOMIC DNA]</scope>
    <source>
        <strain>ATCC 25745 / CCUG 21536 / LMG 10740 / 183-1w</strain>
    </source>
</reference>